<feature type="chain" id="PRO_1000141485" description="Large ribosomal subunit protein uL1">
    <location>
        <begin position="1"/>
        <end position="232"/>
    </location>
</feature>
<reference key="1">
    <citation type="journal article" date="2010" name="J. Bacteriol.">
        <title>Whole genome sequences of two Xylella fastidiosa strains (M12 and M23) causing almond leaf scorch disease in California.</title>
        <authorList>
            <person name="Chen J."/>
            <person name="Xie G."/>
            <person name="Han S."/>
            <person name="Chertkov O."/>
            <person name="Sims D."/>
            <person name="Civerolo E.L."/>
        </authorList>
    </citation>
    <scope>NUCLEOTIDE SEQUENCE [LARGE SCALE GENOMIC DNA]</scope>
    <source>
        <strain>M12</strain>
    </source>
</reference>
<gene>
    <name evidence="1" type="primary">rplA</name>
    <name type="ordered locus">Xfasm12_2199</name>
</gene>
<organism>
    <name type="scientific">Xylella fastidiosa (strain M12)</name>
    <dbReference type="NCBI Taxonomy" id="405440"/>
    <lineage>
        <taxon>Bacteria</taxon>
        <taxon>Pseudomonadati</taxon>
        <taxon>Pseudomonadota</taxon>
        <taxon>Gammaproteobacteria</taxon>
        <taxon>Lysobacterales</taxon>
        <taxon>Lysobacteraceae</taxon>
        <taxon>Xylella</taxon>
    </lineage>
</organism>
<comment type="function">
    <text evidence="1">Binds directly to 23S rRNA. The L1 stalk is quite mobile in the ribosome, and is involved in E site tRNA release.</text>
</comment>
<comment type="function">
    <text evidence="1">Protein L1 is also a translational repressor protein, it controls the translation of the L11 operon by binding to its mRNA.</text>
</comment>
<comment type="subunit">
    <text evidence="1">Part of the 50S ribosomal subunit.</text>
</comment>
<comment type="similarity">
    <text evidence="1">Belongs to the universal ribosomal protein uL1 family.</text>
</comment>
<sequence>MVQTKRQKAIDLAVVPGKSYGIDEAIKILKTATKAKFIESVDVAIRLGVDVKKSDQQVRGSTLLPAGTGKAVRVAVFVPSGAKAEDALAAGADAVGMDDLAEKMQAGDLNYDVVIATPDAMRVVGKLGTLLGPRGLMPNPKVGTVSQNPGEAVKNAKSGQVRYRADKAGIIHCVIGKVSFDDEALKLNLQALLVDLIKIKPTASKGTYLQKVSLSSTMGPGVMIDQSTLSLK</sequence>
<name>RL1_XYLFM</name>
<accession>B0U5Y0</accession>
<protein>
    <recommendedName>
        <fullName evidence="1">Large ribosomal subunit protein uL1</fullName>
    </recommendedName>
    <alternativeName>
        <fullName evidence="2">50S ribosomal protein L1</fullName>
    </alternativeName>
</protein>
<dbReference type="EMBL" id="CP000941">
    <property type="protein sequence ID" value="ACA13052.1"/>
    <property type="molecule type" value="Genomic_DNA"/>
</dbReference>
<dbReference type="RefSeq" id="WP_004084692.1">
    <property type="nucleotide sequence ID" value="NC_010513.1"/>
</dbReference>
<dbReference type="SMR" id="B0U5Y0"/>
<dbReference type="KEGG" id="xfm:Xfasm12_2199"/>
<dbReference type="HOGENOM" id="CLU_062853_0_0_6"/>
<dbReference type="GO" id="GO:0022625">
    <property type="term" value="C:cytosolic large ribosomal subunit"/>
    <property type="evidence" value="ECO:0007669"/>
    <property type="project" value="TreeGrafter"/>
</dbReference>
<dbReference type="GO" id="GO:0019843">
    <property type="term" value="F:rRNA binding"/>
    <property type="evidence" value="ECO:0007669"/>
    <property type="project" value="UniProtKB-UniRule"/>
</dbReference>
<dbReference type="GO" id="GO:0003735">
    <property type="term" value="F:structural constituent of ribosome"/>
    <property type="evidence" value="ECO:0007669"/>
    <property type="project" value="InterPro"/>
</dbReference>
<dbReference type="GO" id="GO:0000049">
    <property type="term" value="F:tRNA binding"/>
    <property type="evidence" value="ECO:0007669"/>
    <property type="project" value="UniProtKB-KW"/>
</dbReference>
<dbReference type="GO" id="GO:0006417">
    <property type="term" value="P:regulation of translation"/>
    <property type="evidence" value="ECO:0007669"/>
    <property type="project" value="UniProtKB-KW"/>
</dbReference>
<dbReference type="GO" id="GO:0006412">
    <property type="term" value="P:translation"/>
    <property type="evidence" value="ECO:0007669"/>
    <property type="project" value="UniProtKB-UniRule"/>
</dbReference>
<dbReference type="CDD" id="cd00403">
    <property type="entry name" value="Ribosomal_L1"/>
    <property type="match status" value="1"/>
</dbReference>
<dbReference type="FunFam" id="3.40.50.790:FF:000001">
    <property type="entry name" value="50S ribosomal protein L1"/>
    <property type="match status" value="1"/>
</dbReference>
<dbReference type="Gene3D" id="3.30.190.20">
    <property type="match status" value="1"/>
</dbReference>
<dbReference type="Gene3D" id="3.40.50.790">
    <property type="match status" value="1"/>
</dbReference>
<dbReference type="HAMAP" id="MF_01318_B">
    <property type="entry name" value="Ribosomal_uL1_B"/>
    <property type="match status" value="1"/>
</dbReference>
<dbReference type="InterPro" id="IPR005878">
    <property type="entry name" value="Ribosom_uL1_bac-type"/>
</dbReference>
<dbReference type="InterPro" id="IPR002143">
    <property type="entry name" value="Ribosomal_uL1"/>
</dbReference>
<dbReference type="InterPro" id="IPR023674">
    <property type="entry name" value="Ribosomal_uL1-like"/>
</dbReference>
<dbReference type="InterPro" id="IPR028364">
    <property type="entry name" value="Ribosomal_uL1/biogenesis"/>
</dbReference>
<dbReference type="InterPro" id="IPR016095">
    <property type="entry name" value="Ribosomal_uL1_3-a/b-sand"/>
</dbReference>
<dbReference type="InterPro" id="IPR023673">
    <property type="entry name" value="Ribosomal_uL1_CS"/>
</dbReference>
<dbReference type="NCBIfam" id="TIGR01169">
    <property type="entry name" value="rplA_bact"/>
    <property type="match status" value="1"/>
</dbReference>
<dbReference type="PANTHER" id="PTHR36427">
    <property type="entry name" value="54S RIBOSOMAL PROTEIN L1, MITOCHONDRIAL"/>
    <property type="match status" value="1"/>
</dbReference>
<dbReference type="PANTHER" id="PTHR36427:SF3">
    <property type="entry name" value="LARGE RIBOSOMAL SUBUNIT PROTEIN UL1M"/>
    <property type="match status" value="1"/>
</dbReference>
<dbReference type="Pfam" id="PF00687">
    <property type="entry name" value="Ribosomal_L1"/>
    <property type="match status" value="1"/>
</dbReference>
<dbReference type="PIRSF" id="PIRSF002155">
    <property type="entry name" value="Ribosomal_L1"/>
    <property type="match status" value="1"/>
</dbReference>
<dbReference type="SUPFAM" id="SSF56808">
    <property type="entry name" value="Ribosomal protein L1"/>
    <property type="match status" value="1"/>
</dbReference>
<dbReference type="PROSITE" id="PS01199">
    <property type="entry name" value="RIBOSOMAL_L1"/>
    <property type="match status" value="1"/>
</dbReference>
<evidence type="ECO:0000255" key="1">
    <source>
        <dbReference type="HAMAP-Rule" id="MF_01318"/>
    </source>
</evidence>
<evidence type="ECO:0000305" key="2"/>
<proteinExistence type="inferred from homology"/>
<keyword id="KW-0678">Repressor</keyword>
<keyword id="KW-0687">Ribonucleoprotein</keyword>
<keyword id="KW-0689">Ribosomal protein</keyword>
<keyword id="KW-0694">RNA-binding</keyword>
<keyword id="KW-0699">rRNA-binding</keyword>
<keyword id="KW-0810">Translation regulation</keyword>
<keyword id="KW-0820">tRNA-binding</keyword>